<keyword id="KW-0028">Amino-acid biosynthesis</keyword>
<keyword id="KW-0057">Aromatic amino acid biosynthesis</keyword>
<keyword id="KW-0328">Glycosyltransferase</keyword>
<keyword id="KW-0460">Magnesium</keyword>
<keyword id="KW-0479">Metal-binding</keyword>
<keyword id="KW-0808">Transferase</keyword>
<keyword id="KW-0822">Tryptophan biosynthesis</keyword>
<reference key="1">
    <citation type="submission" date="2007-07" db="EMBL/GenBank/DDBJ databases">
        <title>Complete sequence of chromosome of Shewanella baltica OS185.</title>
        <authorList>
            <consortium name="US DOE Joint Genome Institute"/>
            <person name="Copeland A."/>
            <person name="Lucas S."/>
            <person name="Lapidus A."/>
            <person name="Barry K."/>
            <person name="Glavina del Rio T."/>
            <person name="Dalin E."/>
            <person name="Tice H."/>
            <person name="Pitluck S."/>
            <person name="Sims D."/>
            <person name="Brettin T."/>
            <person name="Bruce D."/>
            <person name="Detter J.C."/>
            <person name="Han C."/>
            <person name="Schmutz J."/>
            <person name="Larimer F."/>
            <person name="Land M."/>
            <person name="Hauser L."/>
            <person name="Kyrpides N."/>
            <person name="Mikhailova N."/>
            <person name="Brettar I."/>
            <person name="Rodrigues J."/>
            <person name="Konstantinidis K."/>
            <person name="Tiedje J."/>
            <person name="Richardson P."/>
        </authorList>
    </citation>
    <scope>NUCLEOTIDE SEQUENCE [LARGE SCALE GENOMIC DNA]</scope>
    <source>
        <strain>OS185</strain>
    </source>
</reference>
<accession>A6WPW9</accession>
<evidence type="ECO:0000255" key="1">
    <source>
        <dbReference type="HAMAP-Rule" id="MF_00211"/>
    </source>
</evidence>
<name>TRPD_SHEB8</name>
<sequence>MSTNPIQPLLDVLYQGKSLNREQTAELFGALIRGEMSEAAMAGMLVALKMRGETIDEISGAADAMRAAAKPFPCPERNNNPLHNGIVDIVGTGGDGFNTINISTTAAFVAAAAGAKVAKHGNRSVSSKSGSSDLLAQFGIDLTMSPETASRCLDALNLCFLFAPHYHGGVKHAVPVRQALKTRTLFNVLGPLINPARPEFMLLGVYSPELVLPIAKVLKALGTKRAMVVHGSGLDEVALHGNTQVAELKDGDIVEYQLTPADLGVPLAQITDLEGGEPAQNALITEAILKGRGTEAHANAVAINAGCALYVCGIADSVKAGTLLALATIQSGKAFELLSQLAKVSGEALVNGQEKGR</sequence>
<comment type="function">
    <text evidence="1">Catalyzes the transfer of the phosphoribosyl group of 5-phosphorylribose-1-pyrophosphate (PRPP) to anthranilate to yield N-(5'-phosphoribosyl)-anthranilate (PRA).</text>
</comment>
<comment type="catalytic activity">
    <reaction evidence="1">
        <text>N-(5-phospho-beta-D-ribosyl)anthranilate + diphosphate = 5-phospho-alpha-D-ribose 1-diphosphate + anthranilate</text>
        <dbReference type="Rhea" id="RHEA:11768"/>
        <dbReference type="ChEBI" id="CHEBI:16567"/>
        <dbReference type="ChEBI" id="CHEBI:18277"/>
        <dbReference type="ChEBI" id="CHEBI:33019"/>
        <dbReference type="ChEBI" id="CHEBI:58017"/>
        <dbReference type="EC" id="2.4.2.18"/>
    </reaction>
</comment>
<comment type="cofactor">
    <cofactor evidence="1">
        <name>Mg(2+)</name>
        <dbReference type="ChEBI" id="CHEBI:18420"/>
    </cofactor>
    <text evidence="1">Binds 2 magnesium ions per monomer.</text>
</comment>
<comment type="pathway">
    <text evidence="1">Amino-acid biosynthesis; L-tryptophan biosynthesis; L-tryptophan from chorismate: step 2/5.</text>
</comment>
<comment type="subunit">
    <text evidence="1">Homodimer.</text>
</comment>
<comment type="similarity">
    <text evidence="1">Belongs to the anthranilate phosphoribosyltransferase family.</text>
</comment>
<proteinExistence type="inferred from homology"/>
<organism>
    <name type="scientific">Shewanella baltica (strain OS185)</name>
    <dbReference type="NCBI Taxonomy" id="402882"/>
    <lineage>
        <taxon>Bacteria</taxon>
        <taxon>Pseudomonadati</taxon>
        <taxon>Pseudomonadota</taxon>
        <taxon>Gammaproteobacteria</taxon>
        <taxon>Alteromonadales</taxon>
        <taxon>Shewanellaceae</taxon>
        <taxon>Shewanella</taxon>
    </lineage>
</organism>
<protein>
    <recommendedName>
        <fullName evidence="1">Anthranilate phosphoribosyltransferase</fullName>
        <ecNumber evidence="1">2.4.2.18</ecNumber>
    </recommendedName>
</protein>
<feature type="chain" id="PRO_1000043064" description="Anthranilate phosphoribosyltransferase">
    <location>
        <begin position="1"/>
        <end position="357"/>
    </location>
</feature>
<feature type="binding site" evidence="1">
    <location>
        <position position="91"/>
    </location>
    <ligand>
        <name>5-phospho-alpha-D-ribose 1-diphosphate</name>
        <dbReference type="ChEBI" id="CHEBI:58017"/>
    </ligand>
</feature>
<feature type="binding site" evidence="1">
    <location>
        <position position="91"/>
    </location>
    <ligand>
        <name>anthranilate</name>
        <dbReference type="ChEBI" id="CHEBI:16567"/>
        <label>1</label>
    </ligand>
</feature>
<feature type="binding site" evidence="1">
    <location>
        <begin position="94"/>
        <end position="95"/>
    </location>
    <ligand>
        <name>5-phospho-alpha-D-ribose 1-diphosphate</name>
        <dbReference type="ChEBI" id="CHEBI:58017"/>
    </ligand>
</feature>
<feature type="binding site" evidence="1">
    <location>
        <position position="99"/>
    </location>
    <ligand>
        <name>5-phospho-alpha-D-ribose 1-diphosphate</name>
        <dbReference type="ChEBI" id="CHEBI:58017"/>
    </ligand>
</feature>
<feature type="binding site" evidence="1">
    <location>
        <begin position="101"/>
        <end position="104"/>
    </location>
    <ligand>
        <name>5-phospho-alpha-D-ribose 1-diphosphate</name>
        <dbReference type="ChEBI" id="CHEBI:58017"/>
    </ligand>
</feature>
<feature type="binding site" evidence="1">
    <location>
        <position position="103"/>
    </location>
    <ligand>
        <name>Mg(2+)</name>
        <dbReference type="ChEBI" id="CHEBI:18420"/>
        <label>1</label>
    </ligand>
</feature>
<feature type="binding site" evidence="1">
    <location>
        <begin position="119"/>
        <end position="127"/>
    </location>
    <ligand>
        <name>5-phospho-alpha-D-ribose 1-diphosphate</name>
        <dbReference type="ChEBI" id="CHEBI:58017"/>
    </ligand>
</feature>
<feature type="binding site" evidence="1">
    <location>
        <position position="122"/>
    </location>
    <ligand>
        <name>anthranilate</name>
        <dbReference type="ChEBI" id="CHEBI:16567"/>
        <label>1</label>
    </ligand>
</feature>
<feature type="binding site" evidence="1">
    <location>
        <position position="131"/>
    </location>
    <ligand>
        <name>5-phospho-alpha-D-ribose 1-diphosphate</name>
        <dbReference type="ChEBI" id="CHEBI:58017"/>
    </ligand>
</feature>
<feature type="binding site" evidence="1">
    <location>
        <position position="177"/>
    </location>
    <ligand>
        <name>anthranilate</name>
        <dbReference type="ChEBI" id="CHEBI:16567"/>
        <label>2</label>
    </ligand>
</feature>
<feature type="binding site" evidence="1">
    <location>
        <position position="235"/>
    </location>
    <ligand>
        <name>Mg(2+)</name>
        <dbReference type="ChEBI" id="CHEBI:18420"/>
        <label>2</label>
    </ligand>
</feature>
<feature type="binding site" evidence="1">
    <location>
        <position position="236"/>
    </location>
    <ligand>
        <name>Mg(2+)</name>
        <dbReference type="ChEBI" id="CHEBI:18420"/>
        <label>1</label>
    </ligand>
</feature>
<feature type="binding site" evidence="1">
    <location>
        <position position="236"/>
    </location>
    <ligand>
        <name>Mg(2+)</name>
        <dbReference type="ChEBI" id="CHEBI:18420"/>
        <label>2</label>
    </ligand>
</feature>
<dbReference type="EC" id="2.4.2.18" evidence="1"/>
<dbReference type="EMBL" id="CP000753">
    <property type="protein sequence ID" value="ABS08858.1"/>
    <property type="molecule type" value="Genomic_DNA"/>
</dbReference>
<dbReference type="RefSeq" id="WP_012089557.1">
    <property type="nucleotide sequence ID" value="NC_009665.1"/>
</dbReference>
<dbReference type="SMR" id="A6WPW9"/>
<dbReference type="KEGG" id="sbm:Shew185_2724"/>
<dbReference type="HOGENOM" id="CLU_034315_2_1_6"/>
<dbReference type="UniPathway" id="UPA00035">
    <property type="reaction ID" value="UER00041"/>
</dbReference>
<dbReference type="GO" id="GO:0005829">
    <property type="term" value="C:cytosol"/>
    <property type="evidence" value="ECO:0007669"/>
    <property type="project" value="TreeGrafter"/>
</dbReference>
<dbReference type="GO" id="GO:0004048">
    <property type="term" value="F:anthranilate phosphoribosyltransferase activity"/>
    <property type="evidence" value="ECO:0007669"/>
    <property type="project" value="UniProtKB-UniRule"/>
</dbReference>
<dbReference type="GO" id="GO:0000287">
    <property type="term" value="F:magnesium ion binding"/>
    <property type="evidence" value="ECO:0007669"/>
    <property type="project" value="UniProtKB-UniRule"/>
</dbReference>
<dbReference type="GO" id="GO:0000162">
    <property type="term" value="P:L-tryptophan biosynthetic process"/>
    <property type="evidence" value="ECO:0007669"/>
    <property type="project" value="UniProtKB-UniRule"/>
</dbReference>
<dbReference type="FunFam" id="3.40.1030.10:FF:000002">
    <property type="entry name" value="Anthranilate phosphoribosyltransferase"/>
    <property type="match status" value="1"/>
</dbReference>
<dbReference type="Gene3D" id="3.40.1030.10">
    <property type="entry name" value="Nucleoside phosphorylase/phosphoribosyltransferase catalytic domain"/>
    <property type="match status" value="1"/>
</dbReference>
<dbReference type="Gene3D" id="1.20.970.10">
    <property type="entry name" value="Transferase, Pyrimidine Nucleoside Phosphorylase, Chain C"/>
    <property type="match status" value="1"/>
</dbReference>
<dbReference type="HAMAP" id="MF_00211">
    <property type="entry name" value="TrpD"/>
    <property type="match status" value="1"/>
</dbReference>
<dbReference type="InterPro" id="IPR005940">
    <property type="entry name" value="Anthranilate_Pribosyl_Tfrase"/>
</dbReference>
<dbReference type="InterPro" id="IPR000312">
    <property type="entry name" value="Glycosyl_Trfase_fam3"/>
</dbReference>
<dbReference type="InterPro" id="IPR017459">
    <property type="entry name" value="Glycosyl_Trfase_fam3_N_dom"/>
</dbReference>
<dbReference type="InterPro" id="IPR036320">
    <property type="entry name" value="Glycosyl_Trfase_fam3_N_dom_sf"/>
</dbReference>
<dbReference type="InterPro" id="IPR035902">
    <property type="entry name" value="Nuc_phospho_transferase"/>
</dbReference>
<dbReference type="NCBIfam" id="TIGR01245">
    <property type="entry name" value="trpD"/>
    <property type="match status" value="1"/>
</dbReference>
<dbReference type="PANTHER" id="PTHR43285">
    <property type="entry name" value="ANTHRANILATE PHOSPHORIBOSYLTRANSFERASE"/>
    <property type="match status" value="1"/>
</dbReference>
<dbReference type="PANTHER" id="PTHR43285:SF2">
    <property type="entry name" value="ANTHRANILATE PHOSPHORIBOSYLTRANSFERASE"/>
    <property type="match status" value="1"/>
</dbReference>
<dbReference type="Pfam" id="PF02885">
    <property type="entry name" value="Glycos_trans_3N"/>
    <property type="match status" value="1"/>
</dbReference>
<dbReference type="Pfam" id="PF00591">
    <property type="entry name" value="Glycos_transf_3"/>
    <property type="match status" value="1"/>
</dbReference>
<dbReference type="SUPFAM" id="SSF52418">
    <property type="entry name" value="Nucleoside phosphorylase/phosphoribosyltransferase catalytic domain"/>
    <property type="match status" value="1"/>
</dbReference>
<dbReference type="SUPFAM" id="SSF47648">
    <property type="entry name" value="Nucleoside phosphorylase/phosphoribosyltransferase N-terminal domain"/>
    <property type="match status" value="1"/>
</dbReference>
<gene>
    <name evidence="1" type="primary">trpD</name>
    <name type="ordered locus">Shew185_2724</name>
</gene>